<name>FFAR1_MESAU</name>
<proteinExistence type="evidence at transcript level"/>
<accession>Q76JU8</accession>
<comment type="function">
    <text evidence="1 2">G-protein coupled receptor for medium and long chain saturated and unsaturated fatty acids that plays an important role in glucose homeostasis. Fatty acid binding increases glucose-stimulated insulin secretion, and may also enhance the secretion of glucagon-like peptide 1 (GLP-1). May also play a role in bone homeostasis; receptor signaling activates pathways that inhibit osteoclast differentiation. Ligand binding leads to a conformation change that triggers signaling via G-proteins that activate phospholipase C, leading to an increase of the intracellular calcium concentration. Seems to act through a G(q) and G(i)-mediated pathway. Mediates the anti-inflammatory effects of omega-3 polyunsaturated fatty acids (PUFAs) via inhibition of NLRP3 inflammasome activation.</text>
</comment>
<comment type="subcellular location">
    <subcellularLocation>
        <location evidence="1">Cell membrane</location>
        <topology evidence="1">Multi-pass membrane protein</topology>
    </subcellularLocation>
</comment>
<comment type="similarity">
    <text evidence="4">Belongs to the G-protein coupled receptor 1 family.</text>
</comment>
<evidence type="ECO:0000250" key="1">
    <source>
        <dbReference type="UniProtKB" id="O14842"/>
    </source>
</evidence>
<evidence type="ECO:0000250" key="2">
    <source>
        <dbReference type="UniProtKB" id="Q76JU9"/>
    </source>
</evidence>
<evidence type="ECO:0000255" key="3"/>
<evidence type="ECO:0000255" key="4">
    <source>
        <dbReference type="PROSITE-ProRule" id="PRU00521"/>
    </source>
</evidence>
<organism>
    <name type="scientific">Mesocricetus auratus</name>
    <name type="common">Golden hamster</name>
    <dbReference type="NCBI Taxonomy" id="10036"/>
    <lineage>
        <taxon>Eukaryota</taxon>
        <taxon>Metazoa</taxon>
        <taxon>Chordata</taxon>
        <taxon>Craniata</taxon>
        <taxon>Vertebrata</taxon>
        <taxon>Euteleostomi</taxon>
        <taxon>Mammalia</taxon>
        <taxon>Eutheria</taxon>
        <taxon>Euarchontoglires</taxon>
        <taxon>Glires</taxon>
        <taxon>Rodentia</taxon>
        <taxon>Myomorpha</taxon>
        <taxon>Muroidea</taxon>
        <taxon>Cricetidae</taxon>
        <taxon>Cricetinae</taxon>
        <taxon>Mesocricetus</taxon>
    </lineage>
</organism>
<reference key="1">
    <citation type="journal article" date="2003" name="Nature">
        <title>Free fatty acids regulate insulin secretion from pancreatic beta cells through GPR40.</title>
        <authorList>
            <person name="Itoh Y."/>
            <person name="Kawamata Y."/>
            <person name="Harada M."/>
            <person name="Kobayashi M."/>
            <person name="Fujii R."/>
            <person name="Fukusumi S."/>
            <person name="Ogi K."/>
            <person name="Hosoya M."/>
            <person name="Tanaka Y."/>
            <person name="Uejima H."/>
            <person name="Tanaka H."/>
            <person name="Maruyama M."/>
            <person name="Satoh R."/>
            <person name="Okubo S."/>
            <person name="Kizawa H."/>
            <person name="Komatsu H."/>
            <person name="Matsumura F."/>
            <person name="Noguchi Y."/>
            <person name="Shinohara T."/>
            <person name="Hinuma S."/>
            <person name="Fujisawa Y."/>
            <person name="Fujino M."/>
        </authorList>
    </citation>
    <scope>NUCLEOTIDE SEQUENCE [MRNA]</scope>
</reference>
<feature type="chain" id="PRO_0000227754" description="Free fatty acid receptor 1">
    <location>
        <begin position="1"/>
        <end position="300"/>
    </location>
</feature>
<feature type="topological domain" description="Extracellular" evidence="1 3">
    <location>
        <begin position="1"/>
        <end position="8"/>
    </location>
</feature>
<feature type="transmembrane region" description="Helical; Name=1" evidence="1 3">
    <location>
        <begin position="9"/>
        <end position="31"/>
    </location>
</feature>
<feature type="topological domain" description="Cytoplasmic" evidence="1 3">
    <location>
        <begin position="32"/>
        <end position="41"/>
    </location>
</feature>
<feature type="transmembrane region" description="Helical; Name=2" evidence="1 3">
    <location>
        <begin position="42"/>
        <end position="64"/>
    </location>
</feature>
<feature type="topological domain" description="Extracellular" evidence="1 3">
    <location>
        <begin position="65"/>
        <end position="79"/>
    </location>
</feature>
<feature type="transmembrane region" description="Helical; Name=3" evidence="1 3">
    <location>
        <begin position="80"/>
        <end position="101"/>
    </location>
</feature>
<feature type="topological domain" description="Cytoplasmic" evidence="1 3">
    <location>
        <begin position="102"/>
        <end position="121"/>
    </location>
</feature>
<feature type="transmembrane region" description="Helical; Name=4" evidence="1 3">
    <location>
        <begin position="122"/>
        <end position="142"/>
    </location>
</feature>
<feature type="topological domain" description="Extracellular" evidence="1 3">
    <location>
        <begin position="143"/>
        <end position="178"/>
    </location>
</feature>
<feature type="transmembrane region" description="Helical; Name=5" evidence="1 3">
    <location>
        <begin position="179"/>
        <end position="200"/>
    </location>
</feature>
<feature type="topological domain" description="Cytoplasmic" evidence="1 3">
    <location>
        <begin position="201"/>
        <end position="223"/>
    </location>
</feature>
<feature type="transmembrane region" description="Helical; Name=6" evidence="1 3">
    <location>
        <begin position="224"/>
        <end position="248"/>
    </location>
</feature>
<feature type="topological domain" description="Extracellular" evidence="1 3">
    <location>
        <begin position="249"/>
        <end position="256"/>
    </location>
</feature>
<feature type="transmembrane region" description="Helical; Name=7" evidence="1 3">
    <location>
        <begin position="257"/>
        <end position="279"/>
    </location>
</feature>
<feature type="topological domain" description="Cytoplasmic" evidence="1 3">
    <location>
        <begin position="280"/>
        <end position="300"/>
    </location>
</feature>
<feature type="site" description="Important for receptor activation" evidence="1">
    <location>
        <position position="145"/>
    </location>
</feature>
<feature type="site" description="Important for receptor activation" evidence="1">
    <location>
        <position position="172"/>
    </location>
</feature>
<feature type="glycosylation site" description="N-linked (GlcNAc...) asparagine" evidence="3">
    <location>
        <position position="152"/>
    </location>
</feature>
<feature type="disulfide bond" evidence="1">
    <location>
        <begin position="79"/>
        <end position="170"/>
    </location>
</feature>
<gene>
    <name type="primary">FFAR1</name>
    <name type="synonym">GPR40</name>
</gene>
<keyword id="KW-1003">Cell membrane</keyword>
<keyword id="KW-1015">Disulfide bond</keyword>
<keyword id="KW-0297">G-protein coupled receptor</keyword>
<keyword id="KW-0325">Glycoprotein</keyword>
<keyword id="KW-0446">Lipid-binding</keyword>
<keyword id="KW-0472">Membrane</keyword>
<keyword id="KW-0675">Receptor</keyword>
<keyword id="KW-1185">Reference proteome</keyword>
<keyword id="KW-0807">Transducer</keyword>
<keyword id="KW-0812">Transmembrane</keyword>
<keyword id="KW-1133">Transmembrane helix</keyword>
<dbReference type="EMBL" id="AB095746">
    <property type="protein sequence ID" value="BAC82556.1"/>
    <property type="molecule type" value="mRNA"/>
</dbReference>
<dbReference type="RefSeq" id="NP_001268467.1">
    <property type="nucleotide sequence ID" value="NM_001281538.1"/>
</dbReference>
<dbReference type="SMR" id="Q76JU8"/>
<dbReference type="STRING" id="10036.ENSMAUP00000006387"/>
<dbReference type="GlyCosmos" id="Q76JU8">
    <property type="glycosylation" value="1 site, No reported glycans"/>
</dbReference>
<dbReference type="Ensembl" id="ENSMAUT00000010188">
    <property type="protein sequence ID" value="ENSMAUP00000006387"/>
    <property type="gene ID" value="ENSMAUG00000008356"/>
</dbReference>
<dbReference type="GeneID" id="101834763"/>
<dbReference type="KEGG" id="maua:101834763"/>
<dbReference type="CTD" id="2864"/>
<dbReference type="eggNOG" id="ENOG502QVCS">
    <property type="taxonomic scope" value="Eukaryota"/>
</dbReference>
<dbReference type="OrthoDB" id="9533924at2759"/>
<dbReference type="Proteomes" id="UP000189706">
    <property type="component" value="Unplaced"/>
</dbReference>
<dbReference type="GO" id="GO:0005886">
    <property type="term" value="C:plasma membrane"/>
    <property type="evidence" value="ECO:0000250"/>
    <property type="project" value="UniProtKB"/>
</dbReference>
<dbReference type="GO" id="GO:0045125">
    <property type="term" value="F:bioactive lipid receptor activity"/>
    <property type="evidence" value="ECO:0000250"/>
    <property type="project" value="UniProtKB"/>
</dbReference>
<dbReference type="GO" id="GO:0008289">
    <property type="term" value="F:lipid binding"/>
    <property type="evidence" value="ECO:0007669"/>
    <property type="project" value="UniProtKB-KW"/>
</dbReference>
<dbReference type="GO" id="GO:0042593">
    <property type="term" value="P:glucose homeostasis"/>
    <property type="evidence" value="ECO:0000250"/>
    <property type="project" value="UniProtKB"/>
</dbReference>
<dbReference type="GO" id="GO:0030073">
    <property type="term" value="P:insulin secretion"/>
    <property type="evidence" value="ECO:0007669"/>
    <property type="project" value="Ensembl"/>
</dbReference>
<dbReference type="GO" id="GO:1990806">
    <property type="term" value="P:ligand-gated ion channel signaling pathway"/>
    <property type="evidence" value="ECO:0007669"/>
    <property type="project" value="Ensembl"/>
</dbReference>
<dbReference type="GO" id="GO:0032691">
    <property type="term" value="P:negative regulation of interleukin-1 beta production"/>
    <property type="evidence" value="ECO:0007669"/>
    <property type="project" value="Ensembl"/>
</dbReference>
<dbReference type="GO" id="GO:0007200">
    <property type="term" value="P:phospholipase C-activating G protein-coupled receptor signaling pathway"/>
    <property type="evidence" value="ECO:0007669"/>
    <property type="project" value="Ensembl"/>
</dbReference>
<dbReference type="GO" id="GO:0051928">
    <property type="term" value="P:positive regulation of calcium ion transport"/>
    <property type="evidence" value="ECO:0000250"/>
    <property type="project" value="UniProtKB"/>
</dbReference>
<dbReference type="GO" id="GO:0007204">
    <property type="term" value="P:positive regulation of cytosolic calcium ion concentration"/>
    <property type="evidence" value="ECO:0000250"/>
    <property type="project" value="UniProtKB"/>
</dbReference>
<dbReference type="GO" id="GO:0032024">
    <property type="term" value="P:positive regulation of insulin secretion"/>
    <property type="evidence" value="ECO:0000250"/>
    <property type="project" value="UniProtKB"/>
</dbReference>
<dbReference type="GO" id="GO:0070542">
    <property type="term" value="P:response to fatty acid"/>
    <property type="evidence" value="ECO:0000250"/>
    <property type="project" value="UniProtKB"/>
</dbReference>
<dbReference type="CDD" id="cd15169">
    <property type="entry name" value="7tmA_FFAR1"/>
    <property type="match status" value="1"/>
</dbReference>
<dbReference type="FunFam" id="1.20.1070.10:FF:000173">
    <property type="entry name" value="Free fatty acid receptor 1"/>
    <property type="match status" value="1"/>
</dbReference>
<dbReference type="Gene3D" id="1.20.1070.10">
    <property type="entry name" value="Rhodopsin 7-helix transmembrane proteins"/>
    <property type="match status" value="1"/>
</dbReference>
<dbReference type="InterPro" id="IPR000276">
    <property type="entry name" value="GPCR_Rhodpsn"/>
</dbReference>
<dbReference type="InterPro" id="IPR017452">
    <property type="entry name" value="GPCR_Rhodpsn_7TM"/>
</dbReference>
<dbReference type="InterPro" id="IPR013312">
    <property type="entry name" value="GPR40-rel_orph"/>
</dbReference>
<dbReference type="InterPro" id="IPR013313">
    <property type="entry name" value="GPR40_recept_FA"/>
</dbReference>
<dbReference type="PANTHER" id="PTHR45822:SF4">
    <property type="entry name" value="FREE FATTY ACID RECEPTOR 1"/>
    <property type="match status" value="1"/>
</dbReference>
<dbReference type="PANTHER" id="PTHR45822">
    <property type="entry name" value="FREE FATTY ACID RECEPTOR 2-RELATED"/>
    <property type="match status" value="1"/>
</dbReference>
<dbReference type="Pfam" id="PF00001">
    <property type="entry name" value="7tm_1"/>
    <property type="match status" value="1"/>
</dbReference>
<dbReference type="PRINTS" id="PR01905">
    <property type="entry name" value="FATTYACIDR"/>
</dbReference>
<dbReference type="PRINTS" id="PR00237">
    <property type="entry name" value="GPCRRHODOPSN"/>
</dbReference>
<dbReference type="PRINTS" id="PR01904">
    <property type="entry name" value="GPR40FAMILY"/>
</dbReference>
<dbReference type="SUPFAM" id="SSF81321">
    <property type="entry name" value="Family A G protein-coupled receptor-like"/>
    <property type="match status" value="1"/>
</dbReference>
<dbReference type="PROSITE" id="PS50262">
    <property type="entry name" value="G_PROTEIN_RECEP_F1_2"/>
    <property type="match status" value="1"/>
</dbReference>
<protein>
    <recommendedName>
        <fullName>Free fatty acid receptor 1</fullName>
    </recommendedName>
    <alternativeName>
        <fullName>G-protein coupled receptor 40</fullName>
    </alternativeName>
</protein>
<sequence length="300" mass="31680">MALSPQLFFALYVSAFALGFPLNLLAIRGAVARARLRLTPNLVYTLHLACSDLLLAITLPVKAVEALASGAWPLPLPLCPVFVLVHFAPLYAGGGFLAALSAGRYLGAAFPFGYQAVRRPRYSWGVCVAIWALVLCHMGLVLGLEAPGGWLNTTSSSLGINTPVNGSPVCLEAWDPNSARPARLSFSILLFFVPLVITAFCYVGCLRALAHSGLSHKRKLRAAWAAGGAFLTLLLCLGPYNASNVASFVNPDLGGSWRKLGLITGSWSVVLNPLVTGYLGASPGRGTVCTTRTQGGTIQK</sequence>